<name>BIOB_SALPB</name>
<protein>
    <recommendedName>
        <fullName evidence="1">Biotin synthase</fullName>
        <ecNumber evidence="1">2.8.1.6</ecNumber>
    </recommendedName>
</protein>
<proteinExistence type="inferred from homology"/>
<feature type="chain" id="PRO_0000381604" description="Biotin synthase">
    <location>
        <begin position="1"/>
        <end position="346"/>
    </location>
</feature>
<feature type="domain" description="Radical SAM core" evidence="2">
    <location>
        <begin position="38"/>
        <end position="256"/>
    </location>
</feature>
<feature type="binding site" evidence="1">
    <location>
        <position position="53"/>
    </location>
    <ligand>
        <name>[4Fe-4S] cluster</name>
        <dbReference type="ChEBI" id="CHEBI:49883"/>
        <note>4Fe-4S-S-AdoMet</note>
    </ligand>
</feature>
<feature type="binding site" evidence="1">
    <location>
        <position position="57"/>
    </location>
    <ligand>
        <name>[4Fe-4S] cluster</name>
        <dbReference type="ChEBI" id="CHEBI:49883"/>
        <note>4Fe-4S-S-AdoMet</note>
    </ligand>
</feature>
<feature type="binding site" evidence="1">
    <location>
        <position position="60"/>
    </location>
    <ligand>
        <name>[4Fe-4S] cluster</name>
        <dbReference type="ChEBI" id="CHEBI:49883"/>
        <note>4Fe-4S-S-AdoMet</note>
    </ligand>
</feature>
<feature type="binding site" evidence="1">
    <location>
        <position position="97"/>
    </location>
    <ligand>
        <name>[2Fe-2S] cluster</name>
        <dbReference type="ChEBI" id="CHEBI:190135"/>
    </ligand>
</feature>
<feature type="binding site" evidence="1">
    <location>
        <position position="128"/>
    </location>
    <ligand>
        <name>[2Fe-2S] cluster</name>
        <dbReference type="ChEBI" id="CHEBI:190135"/>
    </ligand>
</feature>
<feature type="binding site" evidence="1">
    <location>
        <position position="188"/>
    </location>
    <ligand>
        <name>[2Fe-2S] cluster</name>
        <dbReference type="ChEBI" id="CHEBI:190135"/>
    </ligand>
</feature>
<feature type="binding site" evidence="1">
    <location>
        <position position="260"/>
    </location>
    <ligand>
        <name>[2Fe-2S] cluster</name>
        <dbReference type="ChEBI" id="CHEBI:190135"/>
    </ligand>
</feature>
<sequence>MARHPRWTLSQVTELFEKPLLELLFEAQQIHRQHFDPQQVQVSTLLSIKTGACPEDCKYCPQSSRYKTGLEAERLMEVEQVLDSARKAKNAGSTRFCMGAAWRNPHERDMPYLEKIVQGVKAMGLETCMTLGMLNESQAQRLANAGLDYYNHNLDTSPEFYGNIITTRTYQERLDTLEKVREAGIKVCSGGIVGLGETVTDRAGLLLQLANLPTPPESVPINMLVKVKGTPLADNDDVDAFDFIRTIAVARIMMPTSYVRLSAGREQMNEQTQAMCFMAGANSIFYGCKLLTTPNPAEDKDLQLFRKLGLNPQQTRVLAGDNEQQQRLEQTLMTPDTDDYYNAAAL</sequence>
<evidence type="ECO:0000255" key="1">
    <source>
        <dbReference type="HAMAP-Rule" id="MF_01694"/>
    </source>
</evidence>
<evidence type="ECO:0000255" key="2">
    <source>
        <dbReference type="PROSITE-ProRule" id="PRU01266"/>
    </source>
</evidence>
<reference key="1">
    <citation type="submission" date="2007-11" db="EMBL/GenBank/DDBJ databases">
        <authorList>
            <consortium name="The Salmonella enterica serovar Paratyphi B Genome Sequencing Project"/>
            <person name="McClelland M."/>
            <person name="Sanderson E.K."/>
            <person name="Porwollik S."/>
            <person name="Spieth J."/>
            <person name="Clifton W.S."/>
            <person name="Fulton R."/>
            <person name="Cordes M."/>
            <person name="Wollam A."/>
            <person name="Shah N."/>
            <person name="Pepin K."/>
            <person name="Bhonagiri V."/>
            <person name="Nash W."/>
            <person name="Johnson M."/>
            <person name="Thiruvilangam P."/>
            <person name="Wilson R."/>
        </authorList>
    </citation>
    <scope>NUCLEOTIDE SEQUENCE [LARGE SCALE GENOMIC DNA]</scope>
    <source>
        <strain>ATCC BAA-1250 / SPB7</strain>
    </source>
</reference>
<accession>A9MTI8</accession>
<keyword id="KW-0001">2Fe-2S</keyword>
<keyword id="KW-0004">4Fe-4S</keyword>
<keyword id="KW-0093">Biotin biosynthesis</keyword>
<keyword id="KW-0408">Iron</keyword>
<keyword id="KW-0411">Iron-sulfur</keyword>
<keyword id="KW-0479">Metal-binding</keyword>
<keyword id="KW-0949">S-adenosyl-L-methionine</keyword>
<keyword id="KW-0808">Transferase</keyword>
<comment type="function">
    <text evidence="1">Catalyzes the conversion of dethiobiotin (DTB) to biotin by the insertion of a sulfur atom into dethiobiotin via a radical-based mechanism.</text>
</comment>
<comment type="catalytic activity">
    <reaction evidence="1">
        <text>(4R,5S)-dethiobiotin + (sulfur carrier)-SH + 2 reduced [2Fe-2S]-[ferredoxin] + 2 S-adenosyl-L-methionine = (sulfur carrier)-H + biotin + 2 5'-deoxyadenosine + 2 L-methionine + 2 oxidized [2Fe-2S]-[ferredoxin]</text>
        <dbReference type="Rhea" id="RHEA:22060"/>
        <dbReference type="Rhea" id="RHEA-COMP:10000"/>
        <dbReference type="Rhea" id="RHEA-COMP:10001"/>
        <dbReference type="Rhea" id="RHEA-COMP:14737"/>
        <dbReference type="Rhea" id="RHEA-COMP:14739"/>
        <dbReference type="ChEBI" id="CHEBI:17319"/>
        <dbReference type="ChEBI" id="CHEBI:29917"/>
        <dbReference type="ChEBI" id="CHEBI:33737"/>
        <dbReference type="ChEBI" id="CHEBI:33738"/>
        <dbReference type="ChEBI" id="CHEBI:57586"/>
        <dbReference type="ChEBI" id="CHEBI:57844"/>
        <dbReference type="ChEBI" id="CHEBI:59789"/>
        <dbReference type="ChEBI" id="CHEBI:64428"/>
        <dbReference type="ChEBI" id="CHEBI:149473"/>
        <dbReference type="EC" id="2.8.1.6"/>
    </reaction>
</comment>
<comment type="cofactor">
    <cofactor evidence="1">
        <name>[4Fe-4S] cluster</name>
        <dbReference type="ChEBI" id="CHEBI:49883"/>
    </cofactor>
    <text evidence="1">Binds 1 [4Fe-4S] cluster. The cluster is coordinated with 3 cysteines and an exchangeable S-adenosyl-L-methionine.</text>
</comment>
<comment type="cofactor">
    <cofactor evidence="1">
        <name>[2Fe-2S] cluster</name>
        <dbReference type="ChEBI" id="CHEBI:190135"/>
    </cofactor>
    <text evidence="1">Binds 1 [2Fe-2S] cluster. The cluster is coordinated with 3 cysteines and 1 arginine.</text>
</comment>
<comment type="pathway">
    <text evidence="1">Cofactor biosynthesis; biotin biosynthesis; biotin from 7,8-diaminononanoate: step 2/2.</text>
</comment>
<comment type="subunit">
    <text evidence="1">Homodimer.</text>
</comment>
<comment type="similarity">
    <text evidence="1">Belongs to the radical SAM superfamily. Biotin synthase family.</text>
</comment>
<organism>
    <name type="scientific">Salmonella paratyphi B (strain ATCC BAA-1250 / SPB7)</name>
    <dbReference type="NCBI Taxonomy" id="1016998"/>
    <lineage>
        <taxon>Bacteria</taxon>
        <taxon>Pseudomonadati</taxon>
        <taxon>Pseudomonadota</taxon>
        <taxon>Gammaproteobacteria</taxon>
        <taxon>Enterobacterales</taxon>
        <taxon>Enterobacteriaceae</taxon>
        <taxon>Salmonella</taxon>
    </lineage>
</organism>
<dbReference type="EC" id="2.8.1.6" evidence="1"/>
<dbReference type="EMBL" id="CP000886">
    <property type="protein sequence ID" value="ABX68103.1"/>
    <property type="molecule type" value="Genomic_DNA"/>
</dbReference>
<dbReference type="RefSeq" id="WP_000090729.1">
    <property type="nucleotide sequence ID" value="NC_010102.1"/>
</dbReference>
<dbReference type="SMR" id="A9MTI8"/>
<dbReference type="KEGG" id="spq:SPAB_02725"/>
<dbReference type="PATRIC" id="fig|1016998.12.peg.2578"/>
<dbReference type="HOGENOM" id="CLU_033172_1_2_6"/>
<dbReference type="BioCyc" id="SENT1016998:SPAB_RS11070-MONOMER"/>
<dbReference type="UniPathway" id="UPA00078">
    <property type="reaction ID" value="UER00162"/>
</dbReference>
<dbReference type="Proteomes" id="UP000008556">
    <property type="component" value="Chromosome"/>
</dbReference>
<dbReference type="GO" id="GO:0051537">
    <property type="term" value="F:2 iron, 2 sulfur cluster binding"/>
    <property type="evidence" value="ECO:0007669"/>
    <property type="project" value="UniProtKB-KW"/>
</dbReference>
<dbReference type="GO" id="GO:0051539">
    <property type="term" value="F:4 iron, 4 sulfur cluster binding"/>
    <property type="evidence" value="ECO:0007669"/>
    <property type="project" value="UniProtKB-KW"/>
</dbReference>
<dbReference type="GO" id="GO:0004076">
    <property type="term" value="F:biotin synthase activity"/>
    <property type="evidence" value="ECO:0007669"/>
    <property type="project" value="UniProtKB-UniRule"/>
</dbReference>
<dbReference type="GO" id="GO:0005506">
    <property type="term" value="F:iron ion binding"/>
    <property type="evidence" value="ECO:0007669"/>
    <property type="project" value="UniProtKB-UniRule"/>
</dbReference>
<dbReference type="GO" id="GO:0009102">
    <property type="term" value="P:biotin biosynthetic process"/>
    <property type="evidence" value="ECO:0007669"/>
    <property type="project" value="UniProtKB-UniRule"/>
</dbReference>
<dbReference type="CDD" id="cd01335">
    <property type="entry name" value="Radical_SAM"/>
    <property type="match status" value="1"/>
</dbReference>
<dbReference type="FunFam" id="3.20.20.70:FF:000011">
    <property type="entry name" value="Biotin synthase"/>
    <property type="match status" value="1"/>
</dbReference>
<dbReference type="Gene3D" id="3.20.20.70">
    <property type="entry name" value="Aldolase class I"/>
    <property type="match status" value="1"/>
</dbReference>
<dbReference type="HAMAP" id="MF_01694">
    <property type="entry name" value="BioB"/>
    <property type="match status" value="1"/>
</dbReference>
<dbReference type="InterPro" id="IPR013785">
    <property type="entry name" value="Aldolase_TIM"/>
</dbReference>
<dbReference type="InterPro" id="IPR010722">
    <property type="entry name" value="BATS_dom"/>
</dbReference>
<dbReference type="InterPro" id="IPR002684">
    <property type="entry name" value="Biotin_synth/BioAB"/>
</dbReference>
<dbReference type="InterPro" id="IPR024177">
    <property type="entry name" value="Biotin_synthase"/>
</dbReference>
<dbReference type="InterPro" id="IPR006638">
    <property type="entry name" value="Elp3/MiaA/NifB-like_rSAM"/>
</dbReference>
<dbReference type="InterPro" id="IPR007197">
    <property type="entry name" value="rSAM"/>
</dbReference>
<dbReference type="NCBIfam" id="TIGR00433">
    <property type="entry name" value="bioB"/>
    <property type="match status" value="1"/>
</dbReference>
<dbReference type="PANTHER" id="PTHR22976">
    <property type="entry name" value="BIOTIN SYNTHASE"/>
    <property type="match status" value="1"/>
</dbReference>
<dbReference type="PANTHER" id="PTHR22976:SF2">
    <property type="entry name" value="BIOTIN SYNTHASE, MITOCHONDRIAL"/>
    <property type="match status" value="1"/>
</dbReference>
<dbReference type="Pfam" id="PF06968">
    <property type="entry name" value="BATS"/>
    <property type="match status" value="1"/>
</dbReference>
<dbReference type="Pfam" id="PF04055">
    <property type="entry name" value="Radical_SAM"/>
    <property type="match status" value="1"/>
</dbReference>
<dbReference type="PIRSF" id="PIRSF001619">
    <property type="entry name" value="Biotin_synth"/>
    <property type="match status" value="1"/>
</dbReference>
<dbReference type="SFLD" id="SFLDF00272">
    <property type="entry name" value="biotin_synthase"/>
    <property type="match status" value="1"/>
</dbReference>
<dbReference type="SFLD" id="SFLDS00029">
    <property type="entry name" value="Radical_SAM"/>
    <property type="match status" value="1"/>
</dbReference>
<dbReference type="SMART" id="SM00876">
    <property type="entry name" value="BATS"/>
    <property type="match status" value="1"/>
</dbReference>
<dbReference type="SMART" id="SM00729">
    <property type="entry name" value="Elp3"/>
    <property type="match status" value="1"/>
</dbReference>
<dbReference type="SUPFAM" id="SSF102114">
    <property type="entry name" value="Radical SAM enzymes"/>
    <property type="match status" value="1"/>
</dbReference>
<dbReference type="PROSITE" id="PS51918">
    <property type="entry name" value="RADICAL_SAM"/>
    <property type="match status" value="1"/>
</dbReference>
<gene>
    <name evidence="1" type="primary">bioB</name>
    <name type="ordered locus">SPAB_02725</name>
</gene>